<protein>
    <recommendedName>
        <fullName>Integrin alpha-1</fullName>
    </recommendedName>
    <alternativeName>
        <fullName>CD49 antigen-like family member A</fullName>
    </alternativeName>
    <alternativeName>
        <fullName>Laminin and collagen receptor</fullName>
    </alternativeName>
    <alternativeName>
        <fullName>VLA-1</fullName>
    </alternativeName>
    <cdAntigenName>CD49a</cdAntigenName>
</protein>
<dbReference type="EMBL" id="AK035870">
    <property type="protein sequence ID" value="BAE20498.1"/>
    <property type="molecule type" value="mRNA"/>
</dbReference>
<dbReference type="EMBL" id="AC175538">
    <property type="status" value="NOT_ANNOTATED_CDS"/>
    <property type="molecule type" value="Genomic_DNA"/>
</dbReference>
<dbReference type="EMBL" id="CT025598">
    <property type="status" value="NOT_ANNOTATED_CDS"/>
    <property type="molecule type" value="Genomic_DNA"/>
</dbReference>
<dbReference type="CCDS" id="CCDS36788.1"/>
<dbReference type="RefSeq" id="NP_001028400.2">
    <property type="nucleotide sequence ID" value="NM_001033228.3"/>
</dbReference>
<dbReference type="BMRB" id="Q3V3R4"/>
<dbReference type="SMR" id="Q3V3R4"/>
<dbReference type="BioGRID" id="224968">
    <property type="interactions" value="2"/>
</dbReference>
<dbReference type="ComplexPortal" id="CPX-3114">
    <property type="entry name" value="Integrin alpha1-beta1 complex"/>
</dbReference>
<dbReference type="FunCoup" id="Q3V3R4">
    <property type="interactions" value="921"/>
</dbReference>
<dbReference type="STRING" id="10090.ENSMUSP00000077132"/>
<dbReference type="GlyConnect" id="2395">
    <property type="glycosylation" value="6 N-Linked glycans (6 sites)"/>
</dbReference>
<dbReference type="GlyCosmos" id="Q3V3R4">
    <property type="glycosylation" value="23 sites, 6 glycans"/>
</dbReference>
<dbReference type="GlyGen" id="Q3V3R4">
    <property type="glycosylation" value="25 sites, 17 N-linked glycans (14 sites), 1 O-linked glycan (2 sites)"/>
</dbReference>
<dbReference type="iPTMnet" id="Q3V3R4"/>
<dbReference type="PhosphoSitePlus" id="Q3V3R4"/>
<dbReference type="SwissPalm" id="Q3V3R4"/>
<dbReference type="jPOST" id="Q3V3R4"/>
<dbReference type="PaxDb" id="10090-ENSMUSP00000077132"/>
<dbReference type="PeptideAtlas" id="Q3V3R4"/>
<dbReference type="ProteomicsDB" id="269342"/>
<dbReference type="Pumba" id="Q3V3R4"/>
<dbReference type="Antibodypedia" id="10955">
    <property type="antibodies" value="605 antibodies from 39 providers"/>
</dbReference>
<dbReference type="DNASU" id="109700"/>
<dbReference type="Ensembl" id="ENSMUST00000061673.9">
    <property type="protein sequence ID" value="ENSMUSP00000077132.7"/>
    <property type="gene ID" value="ENSMUSG00000042284.11"/>
</dbReference>
<dbReference type="GeneID" id="109700"/>
<dbReference type="KEGG" id="mmu:109700"/>
<dbReference type="UCSC" id="uc007rxx.1">
    <property type="organism name" value="mouse"/>
</dbReference>
<dbReference type="AGR" id="MGI:96599"/>
<dbReference type="CTD" id="3672"/>
<dbReference type="MGI" id="MGI:96599">
    <property type="gene designation" value="Itga1"/>
</dbReference>
<dbReference type="VEuPathDB" id="HostDB:ENSMUSG00000042284"/>
<dbReference type="eggNOG" id="KOG3637">
    <property type="taxonomic scope" value="Eukaryota"/>
</dbReference>
<dbReference type="GeneTree" id="ENSGT00940000157646"/>
<dbReference type="HOGENOM" id="CLU_004111_2_1_1"/>
<dbReference type="InParanoid" id="Q3V3R4"/>
<dbReference type="OMA" id="TCCSLLK"/>
<dbReference type="OrthoDB" id="5317514at2759"/>
<dbReference type="PhylomeDB" id="Q3V3R4"/>
<dbReference type="TreeFam" id="TF105391"/>
<dbReference type="Reactome" id="R-MMU-216083">
    <property type="pathway name" value="Integrin cell surface interactions"/>
</dbReference>
<dbReference type="Reactome" id="R-MMU-445355">
    <property type="pathway name" value="Smooth Muscle Contraction"/>
</dbReference>
<dbReference type="BioGRID-ORCS" id="109700">
    <property type="hits" value="0 hits in 79 CRISPR screens"/>
</dbReference>
<dbReference type="ChiTaRS" id="Itga1">
    <property type="organism name" value="mouse"/>
</dbReference>
<dbReference type="PRO" id="PR:Q3V3R4"/>
<dbReference type="Proteomes" id="UP000000589">
    <property type="component" value="Chromosome 13"/>
</dbReference>
<dbReference type="RNAct" id="Q3V3R4">
    <property type="molecule type" value="protein"/>
</dbReference>
<dbReference type="Bgee" id="ENSMUSG00000042284">
    <property type="expression patterns" value="Expressed in right lung and 201 other cell types or tissues"/>
</dbReference>
<dbReference type="GO" id="GO:0001669">
    <property type="term" value="C:acrosomal vesicle"/>
    <property type="evidence" value="ECO:0007669"/>
    <property type="project" value="Ensembl"/>
</dbReference>
<dbReference type="GO" id="GO:0045178">
    <property type="term" value="C:basal part of cell"/>
    <property type="evidence" value="ECO:0000314"/>
    <property type="project" value="MGI"/>
</dbReference>
<dbReference type="GO" id="GO:0009986">
    <property type="term" value="C:cell surface"/>
    <property type="evidence" value="ECO:0000314"/>
    <property type="project" value="UniProtKB"/>
</dbReference>
<dbReference type="GO" id="GO:0009897">
    <property type="term" value="C:external side of plasma membrane"/>
    <property type="evidence" value="ECO:0000314"/>
    <property type="project" value="MGI"/>
</dbReference>
<dbReference type="GO" id="GO:0005925">
    <property type="term" value="C:focal adhesion"/>
    <property type="evidence" value="ECO:0007669"/>
    <property type="project" value="Ensembl"/>
</dbReference>
<dbReference type="GO" id="GO:0034665">
    <property type="term" value="C:integrin alpha1-beta1 complex"/>
    <property type="evidence" value="ECO:0007669"/>
    <property type="project" value="Ensembl"/>
</dbReference>
<dbReference type="GO" id="GO:0043204">
    <property type="term" value="C:perikaryon"/>
    <property type="evidence" value="ECO:0007669"/>
    <property type="project" value="Ensembl"/>
</dbReference>
<dbReference type="GO" id="GO:0005886">
    <property type="term" value="C:plasma membrane"/>
    <property type="evidence" value="ECO:0000304"/>
    <property type="project" value="Reactome"/>
</dbReference>
<dbReference type="GO" id="GO:0098639">
    <property type="term" value="F:collagen binding involved in cell-matrix adhesion"/>
    <property type="evidence" value="ECO:0007669"/>
    <property type="project" value="Ensembl"/>
</dbReference>
<dbReference type="GO" id="GO:0046872">
    <property type="term" value="F:metal ion binding"/>
    <property type="evidence" value="ECO:0007669"/>
    <property type="project" value="UniProtKB-KW"/>
</dbReference>
<dbReference type="GO" id="GO:0019211">
    <property type="term" value="F:phosphatase activator activity"/>
    <property type="evidence" value="ECO:0000250"/>
    <property type="project" value="UniProtKB"/>
</dbReference>
<dbReference type="GO" id="GO:0019903">
    <property type="term" value="F:protein phosphatase binding"/>
    <property type="evidence" value="ECO:0007669"/>
    <property type="project" value="Ensembl"/>
</dbReference>
<dbReference type="GO" id="GO:0005102">
    <property type="term" value="F:signaling receptor binding"/>
    <property type="evidence" value="ECO:0007669"/>
    <property type="project" value="Ensembl"/>
</dbReference>
<dbReference type="GO" id="GO:0007155">
    <property type="term" value="P:cell adhesion"/>
    <property type="evidence" value="ECO:0000315"/>
    <property type="project" value="MGI"/>
</dbReference>
<dbReference type="GO" id="GO:0045123">
    <property type="term" value="P:cellular extravasation"/>
    <property type="evidence" value="ECO:0000315"/>
    <property type="project" value="MGI"/>
</dbReference>
<dbReference type="GO" id="GO:0007229">
    <property type="term" value="P:integrin-mediated signaling pathway"/>
    <property type="evidence" value="ECO:0007669"/>
    <property type="project" value="UniProtKB-KW"/>
</dbReference>
<dbReference type="GO" id="GO:0008285">
    <property type="term" value="P:negative regulation of cell population proliferation"/>
    <property type="evidence" value="ECO:0000250"/>
    <property type="project" value="UniProtKB"/>
</dbReference>
<dbReference type="GO" id="GO:0042059">
    <property type="term" value="P:negative regulation of epidermal growth factor receptor signaling pathway"/>
    <property type="evidence" value="ECO:0000315"/>
    <property type="project" value="UniProtKB"/>
</dbReference>
<dbReference type="GO" id="GO:0048812">
    <property type="term" value="P:neuron projection morphogenesis"/>
    <property type="evidence" value="ECO:0007669"/>
    <property type="project" value="Ensembl"/>
</dbReference>
<dbReference type="GO" id="GO:0030593">
    <property type="term" value="P:neutrophil chemotaxis"/>
    <property type="evidence" value="ECO:0000315"/>
    <property type="project" value="MGI"/>
</dbReference>
<dbReference type="GO" id="GO:0043410">
    <property type="term" value="P:positive regulation of MAPK cascade"/>
    <property type="evidence" value="ECO:0007669"/>
    <property type="project" value="Ensembl"/>
</dbReference>
<dbReference type="GO" id="GO:0043525">
    <property type="term" value="P:positive regulation of neuron apoptotic process"/>
    <property type="evidence" value="ECO:0007669"/>
    <property type="project" value="Ensembl"/>
</dbReference>
<dbReference type="GO" id="GO:0042311">
    <property type="term" value="P:vasodilation"/>
    <property type="evidence" value="ECO:0007669"/>
    <property type="project" value="Ensembl"/>
</dbReference>
<dbReference type="CDD" id="cd01469">
    <property type="entry name" value="vWA_integrins_alpha_subunit"/>
    <property type="match status" value="1"/>
</dbReference>
<dbReference type="FunFam" id="2.60.40.1530:FF:000011">
    <property type="entry name" value="Integrin subunit alpha 1"/>
    <property type="match status" value="1"/>
</dbReference>
<dbReference type="FunFam" id="2.130.10.130:FF:000001">
    <property type="entry name" value="Integrin subunit alpha 10"/>
    <property type="match status" value="1"/>
</dbReference>
<dbReference type="FunFam" id="3.40.50.410:FF:000012">
    <property type="entry name" value="Integrin, alpha 10"/>
    <property type="match status" value="1"/>
</dbReference>
<dbReference type="FunFam" id="2.60.40.1460:FF:000001">
    <property type="entry name" value="Integrin, alpha V"/>
    <property type="match status" value="1"/>
</dbReference>
<dbReference type="Gene3D" id="1.20.5.930">
    <property type="entry name" value="Bicelle-embedded integrin alpha(iib) transmembrane segment"/>
    <property type="match status" value="1"/>
</dbReference>
<dbReference type="Gene3D" id="2.130.10.130">
    <property type="entry name" value="Integrin alpha, N-terminal"/>
    <property type="match status" value="1"/>
</dbReference>
<dbReference type="Gene3D" id="2.60.40.1460">
    <property type="entry name" value="Integrin domains. Chain A, domain 2"/>
    <property type="match status" value="1"/>
</dbReference>
<dbReference type="Gene3D" id="2.60.40.1510">
    <property type="entry name" value="ntegrin, alpha v. Chain A, domain 3"/>
    <property type="match status" value="1"/>
</dbReference>
<dbReference type="Gene3D" id="2.60.40.1530">
    <property type="entry name" value="ntegrin, alpha v. Chain A, domain 4"/>
    <property type="match status" value="1"/>
</dbReference>
<dbReference type="Gene3D" id="3.40.50.410">
    <property type="entry name" value="von Willebrand factor, type A domain"/>
    <property type="match status" value="1"/>
</dbReference>
<dbReference type="InterPro" id="IPR013517">
    <property type="entry name" value="FG-GAP"/>
</dbReference>
<dbReference type="InterPro" id="IPR013519">
    <property type="entry name" value="Int_alpha_beta-p"/>
</dbReference>
<dbReference type="InterPro" id="IPR000413">
    <property type="entry name" value="Integrin_alpha"/>
</dbReference>
<dbReference type="InterPro" id="IPR018184">
    <property type="entry name" value="Integrin_alpha_C_CS"/>
</dbReference>
<dbReference type="InterPro" id="IPR013649">
    <property type="entry name" value="Integrin_alpha_Ig-like_1"/>
</dbReference>
<dbReference type="InterPro" id="IPR048285">
    <property type="entry name" value="Integrin_alpha_Ig-like_2"/>
</dbReference>
<dbReference type="InterPro" id="IPR048286">
    <property type="entry name" value="Integrin_alpha_Ig-like_3"/>
</dbReference>
<dbReference type="InterPro" id="IPR028994">
    <property type="entry name" value="Integrin_alpha_N"/>
</dbReference>
<dbReference type="InterPro" id="IPR032695">
    <property type="entry name" value="Integrin_dom_sf"/>
</dbReference>
<dbReference type="InterPro" id="IPR002035">
    <property type="entry name" value="VWF_A"/>
</dbReference>
<dbReference type="InterPro" id="IPR036465">
    <property type="entry name" value="vWFA_dom_sf"/>
</dbReference>
<dbReference type="PANTHER" id="PTHR23220">
    <property type="entry name" value="INTEGRIN ALPHA"/>
    <property type="match status" value="1"/>
</dbReference>
<dbReference type="PANTHER" id="PTHR23220:SF22">
    <property type="entry name" value="INTEGRIN ALPHA-1"/>
    <property type="match status" value="1"/>
</dbReference>
<dbReference type="Pfam" id="PF01839">
    <property type="entry name" value="FG-GAP"/>
    <property type="match status" value="2"/>
</dbReference>
<dbReference type="Pfam" id="PF08441">
    <property type="entry name" value="Integrin_A_Ig_1"/>
    <property type="match status" value="1"/>
</dbReference>
<dbReference type="Pfam" id="PF20805">
    <property type="entry name" value="Integrin_A_Ig_2"/>
    <property type="match status" value="1"/>
</dbReference>
<dbReference type="Pfam" id="PF20806">
    <property type="entry name" value="Integrin_A_Ig_3"/>
    <property type="match status" value="1"/>
</dbReference>
<dbReference type="Pfam" id="PF00092">
    <property type="entry name" value="VWA"/>
    <property type="match status" value="1"/>
</dbReference>
<dbReference type="PRINTS" id="PR01185">
    <property type="entry name" value="INTEGRINA"/>
</dbReference>
<dbReference type="PRINTS" id="PR00453">
    <property type="entry name" value="VWFADOMAIN"/>
</dbReference>
<dbReference type="SMART" id="SM00191">
    <property type="entry name" value="Int_alpha"/>
    <property type="match status" value="5"/>
</dbReference>
<dbReference type="SMART" id="SM00327">
    <property type="entry name" value="VWA"/>
    <property type="match status" value="1"/>
</dbReference>
<dbReference type="SUPFAM" id="SSF69318">
    <property type="entry name" value="Integrin alpha N-terminal domain"/>
    <property type="match status" value="1"/>
</dbReference>
<dbReference type="SUPFAM" id="SSF69179">
    <property type="entry name" value="Integrin domains"/>
    <property type="match status" value="3"/>
</dbReference>
<dbReference type="SUPFAM" id="SSF53300">
    <property type="entry name" value="vWA-like"/>
    <property type="match status" value="1"/>
</dbReference>
<dbReference type="PROSITE" id="PS51470">
    <property type="entry name" value="FG_GAP"/>
    <property type="match status" value="7"/>
</dbReference>
<dbReference type="PROSITE" id="PS00242">
    <property type="entry name" value="INTEGRIN_ALPHA"/>
    <property type="match status" value="1"/>
</dbReference>
<dbReference type="PROSITE" id="PS50234">
    <property type="entry name" value="VWFA"/>
    <property type="match status" value="1"/>
</dbReference>
<name>ITA1_MOUSE</name>
<proteinExistence type="evidence at protein level"/>
<feature type="signal peptide" evidence="1">
    <location>
        <begin position="1"/>
        <end position="28"/>
    </location>
</feature>
<feature type="chain" id="PRO_0000273722" description="Integrin alpha-1" evidence="1">
    <location>
        <begin position="29"/>
        <end position="1179"/>
    </location>
</feature>
<feature type="topological domain" description="Extracellular" evidence="3">
    <location>
        <begin position="29"/>
        <end position="1141"/>
    </location>
</feature>
<feature type="transmembrane region" description="Helical" evidence="3">
    <location>
        <begin position="1142"/>
        <end position="1164"/>
    </location>
</feature>
<feature type="topological domain" description="Cytoplasmic" evidence="3">
    <location>
        <begin position="1165"/>
        <end position="1179"/>
    </location>
</feature>
<feature type="repeat" description="FG-GAP 1" evidence="5">
    <location>
        <begin position="30"/>
        <end position="91"/>
    </location>
</feature>
<feature type="repeat" description="FG-GAP 2" evidence="5">
    <location>
        <begin position="101"/>
        <end position="160"/>
    </location>
</feature>
<feature type="domain" description="VWFA" evidence="4">
    <location>
        <begin position="175"/>
        <end position="364"/>
    </location>
</feature>
<feature type="repeat" description="FG-GAP 3" evidence="5">
    <location>
        <begin position="365"/>
        <end position="417"/>
    </location>
</feature>
<feature type="repeat" description="FG-GAP 4" evidence="5">
    <location>
        <begin position="422"/>
        <end position="474"/>
    </location>
</feature>
<feature type="repeat" description="FG-GAP 5" evidence="5">
    <location>
        <begin position="475"/>
        <end position="537"/>
    </location>
</feature>
<feature type="repeat" description="FG-GAP 6" evidence="5">
    <location>
        <begin position="556"/>
        <end position="614"/>
    </location>
</feature>
<feature type="repeat" description="FG-GAP 7" evidence="5">
    <location>
        <begin position="618"/>
        <end position="678"/>
    </location>
</feature>
<feature type="short sequence motif" description="GFFKR motif">
    <location>
        <begin position="1167"/>
        <end position="1171"/>
    </location>
</feature>
<feature type="binding site" evidence="2">
    <location>
        <position position="497"/>
    </location>
    <ligand>
        <name>Ca(2+)</name>
        <dbReference type="ChEBI" id="CHEBI:29108"/>
        <label>1</label>
    </ligand>
</feature>
<feature type="binding site" evidence="2">
    <location>
        <position position="499"/>
    </location>
    <ligand>
        <name>Ca(2+)</name>
        <dbReference type="ChEBI" id="CHEBI:29108"/>
        <label>1</label>
    </ligand>
</feature>
<feature type="binding site" evidence="2">
    <location>
        <position position="501"/>
    </location>
    <ligand>
        <name>Ca(2+)</name>
        <dbReference type="ChEBI" id="CHEBI:29108"/>
        <label>1</label>
    </ligand>
</feature>
<feature type="binding site" evidence="2">
    <location>
        <position position="505"/>
    </location>
    <ligand>
        <name>Ca(2+)</name>
        <dbReference type="ChEBI" id="CHEBI:29108"/>
        <label>1</label>
    </ligand>
</feature>
<feature type="binding site" evidence="2">
    <location>
        <position position="579"/>
    </location>
    <ligand>
        <name>Ca(2+)</name>
        <dbReference type="ChEBI" id="CHEBI:29108"/>
        <label>2</label>
    </ligand>
</feature>
<feature type="binding site" evidence="2">
    <location>
        <position position="581"/>
    </location>
    <ligand>
        <name>Ca(2+)</name>
        <dbReference type="ChEBI" id="CHEBI:29108"/>
        <label>2</label>
    </ligand>
</feature>
<feature type="binding site" evidence="2">
    <location>
        <position position="583"/>
    </location>
    <ligand>
        <name>Ca(2+)</name>
        <dbReference type="ChEBI" id="CHEBI:29108"/>
        <label>2</label>
    </ligand>
</feature>
<feature type="binding site" evidence="2">
    <location>
        <position position="587"/>
    </location>
    <ligand>
        <name>Ca(2+)</name>
        <dbReference type="ChEBI" id="CHEBI:29108"/>
        <label>2</label>
    </ligand>
</feature>
<feature type="binding site" evidence="2">
    <location>
        <position position="641"/>
    </location>
    <ligand>
        <name>Ca(2+)</name>
        <dbReference type="ChEBI" id="CHEBI:29108"/>
        <label>3</label>
    </ligand>
</feature>
<feature type="binding site" evidence="2">
    <location>
        <position position="643"/>
    </location>
    <ligand>
        <name>Ca(2+)</name>
        <dbReference type="ChEBI" id="CHEBI:29108"/>
        <label>3</label>
    </ligand>
</feature>
<feature type="binding site" evidence="2">
    <location>
        <position position="645"/>
    </location>
    <ligand>
        <name>Ca(2+)</name>
        <dbReference type="ChEBI" id="CHEBI:29108"/>
        <label>3</label>
    </ligand>
</feature>
<feature type="binding site" evidence="2">
    <location>
        <position position="649"/>
    </location>
    <ligand>
        <name>Ca(2+)</name>
        <dbReference type="ChEBI" id="CHEBI:29108"/>
        <label>3</label>
    </ligand>
</feature>
<feature type="glycosylation site" description="N-linked (GlcNAc...) asparagine" evidence="3">
    <location>
        <position position="100"/>
    </location>
</feature>
<feature type="glycosylation site" description="N-linked (GlcNAc...) asparagine" evidence="3">
    <location>
        <position position="105"/>
    </location>
</feature>
<feature type="glycosylation site" description="N-linked (GlcNAc...) asparagine" evidence="3">
    <location>
        <position position="112"/>
    </location>
</feature>
<feature type="glycosylation site" description="N-linked (GlcNAc...) asparagine" evidence="3">
    <location>
        <position position="217"/>
    </location>
</feature>
<feature type="glycosylation site" description="N-linked (GlcNAc...) asparagine" evidence="3">
    <location>
        <position position="317"/>
    </location>
</feature>
<feature type="glycosylation site" description="N-linked (GlcNAc...) asparagine" evidence="3">
    <location>
        <position position="341"/>
    </location>
</feature>
<feature type="glycosylation site" description="N-linked (GlcNAc...) asparagine" evidence="3">
    <location>
        <position position="402"/>
    </location>
</feature>
<feature type="glycosylation site" description="N-linked (GlcNAc...) asparagine" evidence="3">
    <location>
        <position position="418"/>
    </location>
</feature>
<feature type="glycosylation site" description="N-linked (GlcNAc...) asparagine" evidence="3">
    <location>
        <position position="459"/>
    </location>
</feature>
<feature type="glycosylation site" description="N-linked (GlcNAc...) asparagine" evidence="3">
    <location>
        <position position="531"/>
    </location>
</feature>
<feature type="glycosylation site" description="N-linked (GlcNAc...) asparagine" evidence="3">
    <location>
        <position position="698"/>
    </location>
</feature>
<feature type="glycosylation site" description="N-linked (GlcNAc...) asparagine" evidence="3">
    <location>
        <position position="747"/>
    </location>
</feature>
<feature type="glycosylation site" description="N-linked (GlcNAc...) asparagine" evidence="3">
    <location>
        <position position="779"/>
    </location>
</feature>
<feature type="glycosylation site" description="N-linked (GlcNAc...) asparagine" evidence="3">
    <location>
        <position position="839"/>
    </location>
</feature>
<feature type="glycosylation site" description="N-linked (GlcNAc...) asparagine" evidence="3">
    <location>
        <position position="882"/>
    </location>
</feature>
<feature type="glycosylation site" description="N-linked (GlcNAc...) asparagine" evidence="3">
    <location>
        <position position="907"/>
    </location>
</feature>
<feature type="glycosylation site" description="N-linked (GlcNAc...) asparagine" evidence="3">
    <location>
        <position position="938"/>
    </location>
</feature>
<feature type="glycosylation site" description="N-linked (GlcNAc...) asparagine" evidence="3">
    <location>
        <position position="965"/>
    </location>
</feature>
<feature type="glycosylation site" description="N-linked (GlcNAc...) asparagine" evidence="3">
    <location>
        <position position="973"/>
    </location>
</feature>
<feature type="glycosylation site" description="N-linked (GlcNAc...) asparagine" evidence="3">
    <location>
        <position position="1007"/>
    </location>
</feature>
<feature type="glycosylation site" description="N-linked (GlcNAc...) asparagine" evidence="3">
    <location>
        <position position="1083"/>
    </location>
</feature>
<feature type="glycosylation site" description="N-linked (GlcNAc...) asparagine" evidence="3">
    <location>
        <position position="1102"/>
    </location>
</feature>
<feature type="glycosylation site" description="N-linked (GlcNAc...) asparagine" evidence="3">
    <location>
        <position position="1113"/>
    </location>
</feature>
<feature type="disulfide bond" evidence="1">
    <location>
        <begin position="82"/>
        <end position="92"/>
    </location>
</feature>
<feature type="disulfide bond" evidence="1">
    <location>
        <begin position="687"/>
        <end position="696"/>
    </location>
</feature>
<feature type="disulfide bond" evidence="1">
    <location>
        <begin position="702"/>
        <end position="755"/>
    </location>
</feature>
<feature type="disulfide bond" evidence="1">
    <location>
        <begin position="807"/>
        <end position="813"/>
    </location>
</feature>
<feature type="disulfide bond" evidence="1">
    <location>
        <begin position="877"/>
        <end position="885"/>
    </location>
</feature>
<feature type="disulfide bond" evidence="1">
    <location>
        <begin position="1029"/>
        <end position="1062"/>
    </location>
</feature>
<feature type="disulfide bond" evidence="1">
    <location>
        <begin position="1065"/>
        <end position="1072"/>
    </location>
</feature>
<feature type="sequence conflict" description="In Ref. 1; BAE20498." evidence="7" ref="1">
    <original>D</original>
    <variation>N</variation>
    <location>
        <position position="782"/>
    </location>
</feature>
<gene>
    <name type="primary">Itga1</name>
</gene>
<organism>
    <name type="scientific">Mus musculus</name>
    <name type="common">Mouse</name>
    <dbReference type="NCBI Taxonomy" id="10090"/>
    <lineage>
        <taxon>Eukaryota</taxon>
        <taxon>Metazoa</taxon>
        <taxon>Chordata</taxon>
        <taxon>Craniata</taxon>
        <taxon>Vertebrata</taxon>
        <taxon>Euteleostomi</taxon>
        <taxon>Mammalia</taxon>
        <taxon>Eutheria</taxon>
        <taxon>Euarchontoglires</taxon>
        <taxon>Glires</taxon>
        <taxon>Rodentia</taxon>
        <taxon>Myomorpha</taxon>
        <taxon>Muroidea</taxon>
        <taxon>Muridae</taxon>
        <taxon>Murinae</taxon>
        <taxon>Mus</taxon>
        <taxon>Mus</taxon>
    </lineage>
</organism>
<accession>Q3V3R4</accession>
<accession>F8VQN5</accession>
<reference key="1">
    <citation type="journal article" date="2005" name="Science">
        <title>The transcriptional landscape of the mammalian genome.</title>
        <authorList>
            <person name="Carninci P."/>
            <person name="Kasukawa T."/>
            <person name="Katayama S."/>
            <person name="Gough J."/>
            <person name="Frith M.C."/>
            <person name="Maeda N."/>
            <person name="Oyama R."/>
            <person name="Ravasi T."/>
            <person name="Lenhard B."/>
            <person name="Wells C."/>
            <person name="Kodzius R."/>
            <person name="Shimokawa K."/>
            <person name="Bajic V.B."/>
            <person name="Brenner S.E."/>
            <person name="Batalov S."/>
            <person name="Forrest A.R."/>
            <person name="Zavolan M."/>
            <person name="Davis M.J."/>
            <person name="Wilming L.G."/>
            <person name="Aidinis V."/>
            <person name="Allen J.E."/>
            <person name="Ambesi-Impiombato A."/>
            <person name="Apweiler R."/>
            <person name="Aturaliya R.N."/>
            <person name="Bailey T.L."/>
            <person name="Bansal M."/>
            <person name="Baxter L."/>
            <person name="Beisel K.W."/>
            <person name="Bersano T."/>
            <person name="Bono H."/>
            <person name="Chalk A.M."/>
            <person name="Chiu K.P."/>
            <person name="Choudhary V."/>
            <person name="Christoffels A."/>
            <person name="Clutterbuck D.R."/>
            <person name="Crowe M.L."/>
            <person name="Dalla E."/>
            <person name="Dalrymple B.P."/>
            <person name="de Bono B."/>
            <person name="Della Gatta G."/>
            <person name="di Bernardo D."/>
            <person name="Down T."/>
            <person name="Engstrom P."/>
            <person name="Fagiolini M."/>
            <person name="Faulkner G."/>
            <person name="Fletcher C.F."/>
            <person name="Fukushima T."/>
            <person name="Furuno M."/>
            <person name="Futaki S."/>
            <person name="Gariboldi M."/>
            <person name="Georgii-Hemming P."/>
            <person name="Gingeras T.R."/>
            <person name="Gojobori T."/>
            <person name="Green R.E."/>
            <person name="Gustincich S."/>
            <person name="Harbers M."/>
            <person name="Hayashi Y."/>
            <person name="Hensch T.K."/>
            <person name="Hirokawa N."/>
            <person name="Hill D."/>
            <person name="Huminiecki L."/>
            <person name="Iacono M."/>
            <person name="Ikeo K."/>
            <person name="Iwama A."/>
            <person name="Ishikawa T."/>
            <person name="Jakt M."/>
            <person name="Kanapin A."/>
            <person name="Katoh M."/>
            <person name="Kawasawa Y."/>
            <person name="Kelso J."/>
            <person name="Kitamura H."/>
            <person name="Kitano H."/>
            <person name="Kollias G."/>
            <person name="Krishnan S.P."/>
            <person name="Kruger A."/>
            <person name="Kummerfeld S.K."/>
            <person name="Kurochkin I.V."/>
            <person name="Lareau L.F."/>
            <person name="Lazarevic D."/>
            <person name="Lipovich L."/>
            <person name="Liu J."/>
            <person name="Liuni S."/>
            <person name="McWilliam S."/>
            <person name="Madan Babu M."/>
            <person name="Madera M."/>
            <person name="Marchionni L."/>
            <person name="Matsuda H."/>
            <person name="Matsuzawa S."/>
            <person name="Miki H."/>
            <person name="Mignone F."/>
            <person name="Miyake S."/>
            <person name="Morris K."/>
            <person name="Mottagui-Tabar S."/>
            <person name="Mulder N."/>
            <person name="Nakano N."/>
            <person name="Nakauchi H."/>
            <person name="Ng P."/>
            <person name="Nilsson R."/>
            <person name="Nishiguchi S."/>
            <person name="Nishikawa S."/>
            <person name="Nori F."/>
            <person name="Ohara O."/>
            <person name="Okazaki Y."/>
            <person name="Orlando V."/>
            <person name="Pang K.C."/>
            <person name="Pavan W.J."/>
            <person name="Pavesi G."/>
            <person name="Pesole G."/>
            <person name="Petrovsky N."/>
            <person name="Piazza S."/>
            <person name="Reed J."/>
            <person name="Reid J.F."/>
            <person name="Ring B.Z."/>
            <person name="Ringwald M."/>
            <person name="Rost B."/>
            <person name="Ruan Y."/>
            <person name="Salzberg S.L."/>
            <person name="Sandelin A."/>
            <person name="Schneider C."/>
            <person name="Schoenbach C."/>
            <person name="Sekiguchi K."/>
            <person name="Semple C.A."/>
            <person name="Seno S."/>
            <person name="Sessa L."/>
            <person name="Sheng Y."/>
            <person name="Shibata Y."/>
            <person name="Shimada H."/>
            <person name="Shimada K."/>
            <person name="Silva D."/>
            <person name="Sinclair B."/>
            <person name="Sperling S."/>
            <person name="Stupka E."/>
            <person name="Sugiura K."/>
            <person name="Sultana R."/>
            <person name="Takenaka Y."/>
            <person name="Taki K."/>
            <person name="Tammoja K."/>
            <person name="Tan S.L."/>
            <person name="Tang S."/>
            <person name="Taylor M.S."/>
            <person name="Tegner J."/>
            <person name="Teichmann S.A."/>
            <person name="Ueda H.R."/>
            <person name="van Nimwegen E."/>
            <person name="Verardo R."/>
            <person name="Wei C.L."/>
            <person name="Yagi K."/>
            <person name="Yamanishi H."/>
            <person name="Zabarovsky E."/>
            <person name="Zhu S."/>
            <person name="Zimmer A."/>
            <person name="Hide W."/>
            <person name="Bult C."/>
            <person name="Grimmond S.M."/>
            <person name="Teasdale R.D."/>
            <person name="Liu E.T."/>
            <person name="Brusic V."/>
            <person name="Quackenbush J."/>
            <person name="Wahlestedt C."/>
            <person name="Mattick J.S."/>
            <person name="Hume D.A."/>
            <person name="Kai C."/>
            <person name="Sasaki D."/>
            <person name="Tomaru Y."/>
            <person name="Fukuda S."/>
            <person name="Kanamori-Katayama M."/>
            <person name="Suzuki M."/>
            <person name="Aoki J."/>
            <person name="Arakawa T."/>
            <person name="Iida J."/>
            <person name="Imamura K."/>
            <person name="Itoh M."/>
            <person name="Kato T."/>
            <person name="Kawaji H."/>
            <person name="Kawagashira N."/>
            <person name="Kawashima T."/>
            <person name="Kojima M."/>
            <person name="Kondo S."/>
            <person name="Konno H."/>
            <person name="Nakano K."/>
            <person name="Ninomiya N."/>
            <person name="Nishio T."/>
            <person name="Okada M."/>
            <person name="Plessy C."/>
            <person name="Shibata K."/>
            <person name="Shiraki T."/>
            <person name="Suzuki S."/>
            <person name="Tagami M."/>
            <person name="Waki K."/>
            <person name="Watahiki A."/>
            <person name="Okamura-Oho Y."/>
            <person name="Suzuki H."/>
            <person name="Kawai J."/>
            <person name="Hayashizaki Y."/>
        </authorList>
    </citation>
    <scope>NUCLEOTIDE SEQUENCE [LARGE SCALE MRNA]</scope>
    <source>
        <strain>C57BL/6J</strain>
        <tissue>Cerebellum</tissue>
    </source>
</reference>
<reference key="2">
    <citation type="journal article" date="2009" name="PLoS Biol.">
        <title>Lineage-specific biology revealed by a finished genome assembly of the mouse.</title>
        <authorList>
            <person name="Church D.M."/>
            <person name="Goodstadt L."/>
            <person name="Hillier L.W."/>
            <person name="Zody M.C."/>
            <person name="Goldstein S."/>
            <person name="She X."/>
            <person name="Bult C.J."/>
            <person name="Agarwala R."/>
            <person name="Cherry J.L."/>
            <person name="DiCuccio M."/>
            <person name="Hlavina W."/>
            <person name="Kapustin Y."/>
            <person name="Meric P."/>
            <person name="Maglott D."/>
            <person name="Birtle Z."/>
            <person name="Marques A.C."/>
            <person name="Graves T."/>
            <person name="Zhou S."/>
            <person name="Teague B."/>
            <person name="Potamousis K."/>
            <person name="Churas C."/>
            <person name="Place M."/>
            <person name="Herschleb J."/>
            <person name="Runnheim R."/>
            <person name="Forrest D."/>
            <person name="Amos-Landgraf J."/>
            <person name="Schwartz D.C."/>
            <person name="Cheng Z."/>
            <person name="Lindblad-Toh K."/>
            <person name="Eichler E.E."/>
            <person name="Ponting C.P."/>
        </authorList>
    </citation>
    <scope>NUCLEOTIDE SEQUENCE [LARGE SCALE GENOMIC DNA]</scope>
    <source>
        <strain>C57BL/6J</strain>
    </source>
</reference>
<reference key="3">
    <citation type="journal article" date="2005" name="Nat. Cell Biol.">
        <title>Negative regulation of EGFR signalling through integrin-alpha1beta1-mediated activation of protein tyrosine phosphatase TCPTP.</title>
        <authorList>
            <person name="Mattila E."/>
            <person name="Pellinen T."/>
            <person name="Nevo J."/>
            <person name="Vuoriluoto K."/>
            <person name="Arjonen A."/>
            <person name="Ivaska J."/>
        </authorList>
    </citation>
    <scope>FUNCTION IN EGFR SIGNALING</scope>
</reference>
<reference key="4">
    <citation type="journal article" date="2010" name="Cell">
        <title>A tissue-specific atlas of mouse protein phosphorylation and expression.</title>
        <authorList>
            <person name="Huttlin E.L."/>
            <person name="Jedrychowski M.P."/>
            <person name="Elias J.E."/>
            <person name="Goswami T."/>
            <person name="Rad R."/>
            <person name="Beausoleil S.A."/>
            <person name="Villen J."/>
            <person name="Haas W."/>
            <person name="Sowa M.E."/>
            <person name="Gygi S.P."/>
        </authorList>
    </citation>
    <scope>IDENTIFICATION BY MASS SPECTROMETRY [LARGE SCALE ANALYSIS]</scope>
    <source>
        <tissue>Brain</tissue>
        <tissue>Brown adipose tissue</tissue>
        <tissue>Heart</tissue>
        <tissue>Kidney</tissue>
        <tissue>Liver</tissue>
        <tissue>Lung</tissue>
        <tissue>Pancreas</tissue>
        <tissue>Spleen</tissue>
        <tissue>Testis</tissue>
    </source>
</reference>
<keyword id="KW-0106">Calcium</keyword>
<keyword id="KW-0130">Cell adhesion</keyword>
<keyword id="KW-1015">Disulfide bond</keyword>
<keyword id="KW-0325">Glycoprotein</keyword>
<keyword id="KW-0401">Integrin</keyword>
<keyword id="KW-0460">Magnesium</keyword>
<keyword id="KW-0472">Membrane</keyword>
<keyword id="KW-0479">Metal-binding</keyword>
<keyword id="KW-0675">Receptor</keyword>
<keyword id="KW-1185">Reference proteome</keyword>
<keyword id="KW-0677">Repeat</keyword>
<keyword id="KW-0732">Signal</keyword>
<keyword id="KW-0812">Transmembrane</keyword>
<keyword id="KW-1133">Transmembrane helix</keyword>
<evidence type="ECO:0000250" key="1"/>
<evidence type="ECO:0000250" key="2">
    <source>
        <dbReference type="UniProtKB" id="P08648"/>
    </source>
</evidence>
<evidence type="ECO:0000255" key="3"/>
<evidence type="ECO:0000255" key="4">
    <source>
        <dbReference type="PROSITE-ProRule" id="PRU00219"/>
    </source>
</evidence>
<evidence type="ECO:0000255" key="5">
    <source>
        <dbReference type="PROSITE-ProRule" id="PRU00803"/>
    </source>
</evidence>
<evidence type="ECO:0000269" key="6">
    <source>
    </source>
</evidence>
<evidence type="ECO:0000305" key="7"/>
<comment type="function">
    <text evidence="6">Integrin alpha-1/beta-1 is a receptor for laminin and collagen. It recognizes the proline-hydroxylated sequence G-F-P-G-E-R in collagen. Involved in anchorage-dependent, negative regulation of EGF-stimulated cell growth.</text>
</comment>
<comment type="subunit">
    <text evidence="1">Heterodimer of an alpha and a beta subunit. Alpha-1 associates with beta-1 (By similarity). Interacts with RAB21 (By similarity). Interacts (via cytoplasmic domain) with PTPN2; activates PTPN2 phosphatase activity towards EGFR and negatively regulates EGF signaling (By similarity).</text>
</comment>
<comment type="subcellular location">
    <subcellularLocation>
        <location evidence="1">Membrane</location>
        <topology evidence="1">Single-pass type I membrane protein</topology>
    </subcellularLocation>
</comment>
<comment type="domain">
    <text>The integrin I-domain (insert) is a VWFA domain. Integrins with I-domains do not undergo protease cleavage.</text>
</comment>
<comment type="similarity">
    <text evidence="7">Belongs to the integrin alpha chain family.</text>
</comment>
<sequence length="1179" mass="130810">MVPRRPASLEVTVACIWLLTVILGVCISFNVDVKNSMSFSGPVEDMFGYTVQQYENEEGKWVLIGSPLVGQPKARTGDVYKCPVGRERSMPCVKLDLPVNTSIPNVTEIKENMTFGSTLVTNPKGGFLACGPLYAYRCGHLHYTTGICSDVSPTFQVVNSFAPVQECSTQLDIVIVLDGSNSIYPWESVTAFLNDLLKRMDIGPKQTQVGIVQYGANVTHEFNLNKYSSTEEVLVAANKIGRRGGLQTMTALGIDTARKEAFTEARGARRGVKKVMVIVTDGESHDNYRLKQVIQDCEDENIQRFSIAILGHYNRGNLSTEKFVEEIKSIASEPTEKHFFNVSDELALVTIVKALGERIFALEATADQSAASFEMEMSQTGFSAHYSQDWVMLGAVGAYDWNGTVVMQKANQIVIPHNTTFQTEPTKMNEPLASYLGYTVNSATIPGDVLYIAGQPRYNHTGQVVIYKMEDGDVNILQTLSGEQIGSYFGSVLTTIDIDKDSYTDLLLVGAPMYMGTEKEEQGKVYVYAVNQTRFEYQMSLEPIKQTCCSSLKDNSCTKENKNEPCGARFGTAVAAVKDLNVDGFNDVVIGAPLEDDHAGAVYIYHGSGKTIRKEYAQRIPSGGDGKTLKFFGQSIHGEMDLNGDGLTDVTIGGLGGAALFWARDVAVVKVTMNFEPNKVNIQKKNCRVEGKETVCINATMCFHVKLKSKEDSVYEADLQYRVTLDSLRQISRSFFSGTQERRIQRNLTVRESECIRHSFYMLDKHDFQDSVRVTLDFNLTDPENGPVLDDALPNSVHGHIPFAKDCGNKERCVSDLTLDVSTTEKNLLIVRSQNDKFNVSLTVKNKGDSAYNTRTVVQYSPNLIFSGIEEIQKDSCESNQNITCRVGYPFLRTGDVVNFKIIFQFNTSHLSENAIIHLSATSDSEEPLESLYDNEVNISIPVKYEVGLQFYSSASEHHISVAANETVPELINSTKDIGDEINVFYTIRKRGHFPMPELRLAISFPNLTSDGYPVLYPTGWSSSDNVNCRPRSLEDPLGINSGKKMTISKSEVLKRGTIQDCSTCKIATITCHLLPSDVSQVNVSLILWKPTFIKAHFSSLNLTIRGELQSENSSLTLSSSNRKRELAIQISKDGLPGRVPLWVILLSAFAGLLLLMLLILALWKIGFFKRPLKKKMEK</sequence>